<name>YBEY_PARMW</name>
<gene>
    <name evidence="1" type="primary">ybeY</name>
    <name type="ordered locus">SYNW2313</name>
</gene>
<accession>Q7U3W4</accession>
<sequence>MELDLALDAAGPWSPEDPSSLIETQTWQITLVDWIQTICADPSLPCPALVCQADEVSLGLRFTDDATITALNSTWRQRNQATDVLSFAALEEAPGLPDVSCVELGDIVISLDTARRQASEHGHNLTRELRWLVSHGLLHLLGWDHPDEESLVAMLQLQEQLLDGGSNVRIRDPHSVDTTVDVNAH</sequence>
<comment type="function">
    <text evidence="1">Single strand-specific metallo-endoribonuclease involved in late-stage 70S ribosome quality control and in maturation of the 3' terminus of the 16S rRNA.</text>
</comment>
<comment type="cofactor">
    <cofactor evidence="1">
        <name>Zn(2+)</name>
        <dbReference type="ChEBI" id="CHEBI:29105"/>
    </cofactor>
    <text evidence="1">Binds 1 zinc ion.</text>
</comment>
<comment type="subcellular location">
    <subcellularLocation>
        <location evidence="1">Cytoplasm</location>
    </subcellularLocation>
</comment>
<comment type="similarity">
    <text evidence="1">Belongs to the endoribonuclease YbeY family.</text>
</comment>
<dbReference type="EC" id="3.1.-.-" evidence="1"/>
<dbReference type="EMBL" id="BX569695">
    <property type="protein sequence ID" value="CAE08828.1"/>
    <property type="molecule type" value="Genomic_DNA"/>
</dbReference>
<dbReference type="RefSeq" id="WP_011129166.1">
    <property type="nucleotide sequence ID" value="NC_005070.1"/>
</dbReference>
<dbReference type="SMR" id="Q7U3W4"/>
<dbReference type="STRING" id="84588.SYNW2313"/>
<dbReference type="KEGG" id="syw:SYNW2313"/>
<dbReference type="eggNOG" id="COG0319">
    <property type="taxonomic scope" value="Bacteria"/>
</dbReference>
<dbReference type="HOGENOM" id="CLU_106710_3_0_3"/>
<dbReference type="Proteomes" id="UP000001422">
    <property type="component" value="Chromosome"/>
</dbReference>
<dbReference type="GO" id="GO:0005737">
    <property type="term" value="C:cytoplasm"/>
    <property type="evidence" value="ECO:0007669"/>
    <property type="project" value="UniProtKB-SubCell"/>
</dbReference>
<dbReference type="GO" id="GO:0004222">
    <property type="term" value="F:metalloendopeptidase activity"/>
    <property type="evidence" value="ECO:0007669"/>
    <property type="project" value="InterPro"/>
</dbReference>
<dbReference type="GO" id="GO:0004521">
    <property type="term" value="F:RNA endonuclease activity"/>
    <property type="evidence" value="ECO:0007669"/>
    <property type="project" value="UniProtKB-UniRule"/>
</dbReference>
<dbReference type="GO" id="GO:0008270">
    <property type="term" value="F:zinc ion binding"/>
    <property type="evidence" value="ECO:0007669"/>
    <property type="project" value="UniProtKB-UniRule"/>
</dbReference>
<dbReference type="GO" id="GO:0006364">
    <property type="term" value="P:rRNA processing"/>
    <property type="evidence" value="ECO:0007669"/>
    <property type="project" value="UniProtKB-UniRule"/>
</dbReference>
<dbReference type="Gene3D" id="3.40.390.30">
    <property type="entry name" value="Metalloproteases ('zincins'), catalytic domain"/>
    <property type="match status" value="1"/>
</dbReference>
<dbReference type="HAMAP" id="MF_00009">
    <property type="entry name" value="Endoribonucl_YbeY"/>
    <property type="match status" value="1"/>
</dbReference>
<dbReference type="InterPro" id="IPR023091">
    <property type="entry name" value="MetalPrtase_cat_dom_sf_prd"/>
</dbReference>
<dbReference type="InterPro" id="IPR002036">
    <property type="entry name" value="YbeY"/>
</dbReference>
<dbReference type="InterPro" id="IPR020549">
    <property type="entry name" value="YbeY_CS"/>
</dbReference>
<dbReference type="NCBIfam" id="TIGR00043">
    <property type="entry name" value="rRNA maturation RNase YbeY"/>
    <property type="match status" value="1"/>
</dbReference>
<dbReference type="PANTHER" id="PTHR46986">
    <property type="entry name" value="ENDORIBONUCLEASE YBEY, CHLOROPLASTIC"/>
    <property type="match status" value="1"/>
</dbReference>
<dbReference type="PANTHER" id="PTHR46986:SF1">
    <property type="entry name" value="ENDORIBONUCLEASE YBEY, CHLOROPLASTIC"/>
    <property type="match status" value="1"/>
</dbReference>
<dbReference type="Pfam" id="PF02130">
    <property type="entry name" value="YbeY"/>
    <property type="match status" value="1"/>
</dbReference>
<dbReference type="SUPFAM" id="SSF55486">
    <property type="entry name" value="Metalloproteases ('zincins'), catalytic domain"/>
    <property type="match status" value="1"/>
</dbReference>
<dbReference type="PROSITE" id="PS01306">
    <property type="entry name" value="UPF0054"/>
    <property type="match status" value="1"/>
</dbReference>
<protein>
    <recommendedName>
        <fullName evidence="1">Endoribonuclease YbeY</fullName>
        <ecNumber evidence="1">3.1.-.-</ecNumber>
    </recommendedName>
</protein>
<reference key="1">
    <citation type="journal article" date="2003" name="Nature">
        <title>The genome of a motile marine Synechococcus.</title>
        <authorList>
            <person name="Palenik B."/>
            <person name="Brahamsha B."/>
            <person name="Larimer F.W."/>
            <person name="Land M.L."/>
            <person name="Hauser L."/>
            <person name="Chain P."/>
            <person name="Lamerdin J.E."/>
            <person name="Regala W."/>
            <person name="Allen E.E."/>
            <person name="McCarren J."/>
            <person name="Paulsen I.T."/>
            <person name="Dufresne A."/>
            <person name="Partensky F."/>
            <person name="Webb E.A."/>
            <person name="Waterbury J."/>
        </authorList>
    </citation>
    <scope>NUCLEOTIDE SEQUENCE [LARGE SCALE GENOMIC DNA]</scope>
    <source>
        <strain>WH8102</strain>
    </source>
</reference>
<keyword id="KW-0963">Cytoplasm</keyword>
<keyword id="KW-0255">Endonuclease</keyword>
<keyword id="KW-0378">Hydrolase</keyword>
<keyword id="KW-0479">Metal-binding</keyword>
<keyword id="KW-0540">Nuclease</keyword>
<keyword id="KW-0690">Ribosome biogenesis</keyword>
<keyword id="KW-0698">rRNA processing</keyword>
<keyword id="KW-0862">Zinc</keyword>
<feature type="chain" id="PRO_0000102551" description="Endoribonuclease YbeY">
    <location>
        <begin position="1"/>
        <end position="185"/>
    </location>
</feature>
<feature type="binding site" evidence="1">
    <location>
        <position position="135"/>
    </location>
    <ligand>
        <name>Zn(2+)</name>
        <dbReference type="ChEBI" id="CHEBI:29105"/>
        <note>catalytic</note>
    </ligand>
</feature>
<feature type="binding site" evidence="1">
    <location>
        <position position="139"/>
    </location>
    <ligand>
        <name>Zn(2+)</name>
        <dbReference type="ChEBI" id="CHEBI:29105"/>
        <note>catalytic</note>
    </ligand>
</feature>
<feature type="binding site" evidence="1">
    <location>
        <position position="145"/>
    </location>
    <ligand>
        <name>Zn(2+)</name>
        <dbReference type="ChEBI" id="CHEBI:29105"/>
        <note>catalytic</note>
    </ligand>
</feature>
<evidence type="ECO:0000255" key="1">
    <source>
        <dbReference type="HAMAP-Rule" id="MF_00009"/>
    </source>
</evidence>
<organism>
    <name type="scientific">Parasynechococcus marenigrum (strain WH8102)</name>
    <dbReference type="NCBI Taxonomy" id="84588"/>
    <lineage>
        <taxon>Bacteria</taxon>
        <taxon>Bacillati</taxon>
        <taxon>Cyanobacteriota</taxon>
        <taxon>Cyanophyceae</taxon>
        <taxon>Synechococcales</taxon>
        <taxon>Prochlorococcaceae</taxon>
        <taxon>Parasynechococcus</taxon>
        <taxon>Parasynechococcus marenigrum</taxon>
    </lineage>
</organism>
<proteinExistence type="inferred from homology"/>